<organism>
    <name type="scientific">Rhodopseudomonas palustris (strain BisB18)</name>
    <dbReference type="NCBI Taxonomy" id="316056"/>
    <lineage>
        <taxon>Bacteria</taxon>
        <taxon>Pseudomonadati</taxon>
        <taxon>Pseudomonadota</taxon>
        <taxon>Alphaproteobacteria</taxon>
        <taxon>Hyphomicrobiales</taxon>
        <taxon>Nitrobacteraceae</taxon>
        <taxon>Rhodopseudomonas</taxon>
    </lineage>
</organism>
<accession>Q20Y45</accession>
<sequence length="429" mass="44811">MDRIRIVGGAQLNGTIPISGAKNAALPLMIAGLLTDETLILDNVPRLADVAQLQRILGNHGVDIMAAGKRPGDHEYQGQTLHISAKNIIDTTAPYELVSKMRASFWVIAPLLARMHEAKVSLPGGCAIGTRPVDLLIMALEKLGATLTIDGGYVIASAPGGLKGAAIEFPKVTVSGTHVALMAATLARGTTVIGNAACEPEIVDVADCLNKMGGKISGAGTPRITIEGVAKLHGARHTVLPDRIETGTYAMAVAMTGGDVQLSGARPELLQSALDVLTQAGATITVNNDGIRVTRNGAGLNPVTVTTAPFPGFPTDLQAQLMALMACAKGASHITETIFENRFMHVQELARFGARIQLDGETATIDGVAKLRGAPVMATDLRASVSLVIAGLAAEGETMVNRIYHLDRGFERLEEKLSACGATIERISG</sequence>
<evidence type="ECO:0000255" key="1">
    <source>
        <dbReference type="HAMAP-Rule" id="MF_00111"/>
    </source>
</evidence>
<proteinExistence type="inferred from homology"/>
<protein>
    <recommendedName>
        <fullName evidence="1">UDP-N-acetylglucosamine 1-carboxyvinyltransferase</fullName>
        <ecNumber evidence="1">2.5.1.7</ecNumber>
    </recommendedName>
    <alternativeName>
        <fullName evidence="1">Enoylpyruvate transferase</fullName>
    </alternativeName>
    <alternativeName>
        <fullName evidence="1">UDP-N-acetylglucosamine enolpyruvyl transferase</fullName>
        <shortName evidence="1">EPT</shortName>
    </alternativeName>
</protein>
<comment type="function">
    <text evidence="1">Cell wall formation. Adds enolpyruvyl to UDP-N-acetylglucosamine.</text>
</comment>
<comment type="catalytic activity">
    <reaction evidence="1">
        <text>phosphoenolpyruvate + UDP-N-acetyl-alpha-D-glucosamine = UDP-N-acetyl-3-O-(1-carboxyvinyl)-alpha-D-glucosamine + phosphate</text>
        <dbReference type="Rhea" id="RHEA:18681"/>
        <dbReference type="ChEBI" id="CHEBI:43474"/>
        <dbReference type="ChEBI" id="CHEBI:57705"/>
        <dbReference type="ChEBI" id="CHEBI:58702"/>
        <dbReference type="ChEBI" id="CHEBI:68483"/>
        <dbReference type="EC" id="2.5.1.7"/>
    </reaction>
</comment>
<comment type="pathway">
    <text evidence="1">Cell wall biogenesis; peptidoglycan biosynthesis.</text>
</comment>
<comment type="subcellular location">
    <subcellularLocation>
        <location evidence="1">Cytoplasm</location>
    </subcellularLocation>
</comment>
<comment type="similarity">
    <text evidence="1">Belongs to the EPSP synthase family. MurA subfamily.</text>
</comment>
<name>MURA_RHOPB</name>
<gene>
    <name evidence="1" type="primary">murA</name>
    <name type="ordered locus">RPC_4418</name>
</gene>
<dbReference type="EC" id="2.5.1.7" evidence="1"/>
<dbReference type="EMBL" id="CP000301">
    <property type="protein sequence ID" value="ABD89941.1"/>
    <property type="molecule type" value="Genomic_DNA"/>
</dbReference>
<dbReference type="SMR" id="Q20Y45"/>
<dbReference type="STRING" id="316056.RPC_4418"/>
<dbReference type="KEGG" id="rpc:RPC_4418"/>
<dbReference type="eggNOG" id="COG0766">
    <property type="taxonomic scope" value="Bacteria"/>
</dbReference>
<dbReference type="HOGENOM" id="CLU_027387_0_0_5"/>
<dbReference type="OrthoDB" id="9803760at2"/>
<dbReference type="UniPathway" id="UPA00219"/>
<dbReference type="GO" id="GO:0005737">
    <property type="term" value="C:cytoplasm"/>
    <property type="evidence" value="ECO:0007669"/>
    <property type="project" value="UniProtKB-SubCell"/>
</dbReference>
<dbReference type="GO" id="GO:0008760">
    <property type="term" value="F:UDP-N-acetylglucosamine 1-carboxyvinyltransferase activity"/>
    <property type="evidence" value="ECO:0007669"/>
    <property type="project" value="UniProtKB-UniRule"/>
</dbReference>
<dbReference type="GO" id="GO:0051301">
    <property type="term" value="P:cell division"/>
    <property type="evidence" value="ECO:0007669"/>
    <property type="project" value="UniProtKB-KW"/>
</dbReference>
<dbReference type="GO" id="GO:0071555">
    <property type="term" value="P:cell wall organization"/>
    <property type="evidence" value="ECO:0007669"/>
    <property type="project" value="UniProtKB-KW"/>
</dbReference>
<dbReference type="GO" id="GO:0009252">
    <property type="term" value="P:peptidoglycan biosynthetic process"/>
    <property type="evidence" value="ECO:0007669"/>
    <property type="project" value="UniProtKB-UniRule"/>
</dbReference>
<dbReference type="GO" id="GO:0008360">
    <property type="term" value="P:regulation of cell shape"/>
    <property type="evidence" value="ECO:0007669"/>
    <property type="project" value="UniProtKB-KW"/>
</dbReference>
<dbReference type="GO" id="GO:0019277">
    <property type="term" value="P:UDP-N-acetylgalactosamine biosynthetic process"/>
    <property type="evidence" value="ECO:0007669"/>
    <property type="project" value="InterPro"/>
</dbReference>
<dbReference type="CDD" id="cd01555">
    <property type="entry name" value="UdpNAET"/>
    <property type="match status" value="1"/>
</dbReference>
<dbReference type="FunFam" id="3.65.10.10:FF:000001">
    <property type="entry name" value="UDP-N-acetylglucosamine 1-carboxyvinyltransferase"/>
    <property type="match status" value="1"/>
</dbReference>
<dbReference type="Gene3D" id="3.65.10.10">
    <property type="entry name" value="Enolpyruvate transferase domain"/>
    <property type="match status" value="2"/>
</dbReference>
<dbReference type="HAMAP" id="MF_00111">
    <property type="entry name" value="MurA"/>
    <property type="match status" value="1"/>
</dbReference>
<dbReference type="InterPro" id="IPR001986">
    <property type="entry name" value="Enolpyruvate_Tfrase_dom"/>
</dbReference>
<dbReference type="InterPro" id="IPR036968">
    <property type="entry name" value="Enolpyruvate_Tfrase_sf"/>
</dbReference>
<dbReference type="InterPro" id="IPR050068">
    <property type="entry name" value="MurA_subfamily"/>
</dbReference>
<dbReference type="InterPro" id="IPR013792">
    <property type="entry name" value="RNA3'P_cycl/enolpyr_Trfase_a/b"/>
</dbReference>
<dbReference type="InterPro" id="IPR005750">
    <property type="entry name" value="UDP_GlcNAc_COvinyl_MurA"/>
</dbReference>
<dbReference type="NCBIfam" id="TIGR01072">
    <property type="entry name" value="murA"/>
    <property type="match status" value="1"/>
</dbReference>
<dbReference type="NCBIfam" id="NF006873">
    <property type="entry name" value="PRK09369.1"/>
    <property type="match status" value="1"/>
</dbReference>
<dbReference type="PANTHER" id="PTHR43783">
    <property type="entry name" value="UDP-N-ACETYLGLUCOSAMINE 1-CARBOXYVINYLTRANSFERASE"/>
    <property type="match status" value="1"/>
</dbReference>
<dbReference type="PANTHER" id="PTHR43783:SF1">
    <property type="entry name" value="UDP-N-ACETYLGLUCOSAMINE 1-CARBOXYVINYLTRANSFERASE"/>
    <property type="match status" value="1"/>
</dbReference>
<dbReference type="Pfam" id="PF00275">
    <property type="entry name" value="EPSP_synthase"/>
    <property type="match status" value="1"/>
</dbReference>
<dbReference type="SUPFAM" id="SSF55205">
    <property type="entry name" value="EPT/RTPC-like"/>
    <property type="match status" value="1"/>
</dbReference>
<reference key="1">
    <citation type="submission" date="2006-03" db="EMBL/GenBank/DDBJ databases">
        <title>Complete sequence of Rhodopseudomonas palustris BisB18.</title>
        <authorList>
            <consortium name="US DOE Joint Genome Institute"/>
            <person name="Copeland A."/>
            <person name="Lucas S."/>
            <person name="Lapidus A."/>
            <person name="Barry K."/>
            <person name="Detter J.C."/>
            <person name="Glavina del Rio T."/>
            <person name="Hammon N."/>
            <person name="Israni S."/>
            <person name="Dalin E."/>
            <person name="Tice H."/>
            <person name="Pitluck S."/>
            <person name="Chain P."/>
            <person name="Malfatti S."/>
            <person name="Shin M."/>
            <person name="Vergez L."/>
            <person name="Schmutz J."/>
            <person name="Larimer F."/>
            <person name="Land M."/>
            <person name="Hauser L."/>
            <person name="Pelletier D.A."/>
            <person name="Kyrpides N."/>
            <person name="Anderson I."/>
            <person name="Oda Y."/>
            <person name="Harwood C.S."/>
            <person name="Richardson P."/>
        </authorList>
    </citation>
    <scope>NUCLEOTIDE SEQUENCE [LARGE SCALE GENOMIC DNA]</scope>
    <source>
        <strain>BisB18</strain>
    </source>
</reference>
<keyword id="KW-0131">Cell cycle</keyword>
<keyword id="KW-0132">Cell division</keyword>
<keyword id="KW-0133">Cell shape</keyword>
<keyword id="KW-0961">Cell wall biogenesis/degradation</keyword>
<keyword id="KW-0963">Cytoplasm</keyword>
<keyword id="KW-0573">Peptidoglycan synthesis</keyword>
<keyword id="KW-0670">Pyruvate</keyword>
<keyword id="KW-0808">Transferase</keyword>
<feature type="chain" id="PRO_1000023086" description="UDP-N-acetylglucosamine 1-carboxyvinyltransferase">
    <location>
        <begin position="1"/>
        <end position="429"/>
    </location>
</feature>
<feature type="active site" description="Proton donor" evidence="1">
    <location>
        <position position="126"/>
    </location>
</feature>
<feature type="binding site" evidence="1">
    <location>
        <begin position="22"/>
        <end position="23"/>
    </location>
    <ligand>
        <name>phosphoenolpyruvate</name>
        <dbReference type="ChEBI" id="CHEBI:58702"/>
    </ligand>
</feature>
<feature type="binding site" evidence="1">
    <location>
        <position position="102"/>
    </location>
    <ligand>
        <name>UDP-N-acetyl-alpha-D-glucosamine</name>
        <dbReference type="ChEBI" id="CHEBI:57705"/>
    </ligand>
</feature>
<feature type="binding site" evidence="1">
    <location>
        <begin position="131"/>
        <end position="135"/>
    </location>
    <ligand>
        <name>UDP-N-acetyl-alpha-D-glucosamine</name>
        <dbReference type="ChEBI" id="CHEBI:57705"/>
    </ligand>
</feature>
<feature type="binding site" evidence="1">
    <location>
        <position position="316"/>
    </location>
    <ligand>
        <name>UDP-N-acetyl-alpha-D-glucosamine</name>
        <dbReference type="ChEBI" id="CHEBI:57705"/>
    </ligand>
</feature>
<feature type="binding site" evidence="1">
    <location>
        <position position="338"/>
    </location>
    <ligand>
        <name>UDP-N-acetyl-alpha-D-glucosamine</name>
        <dbReference type="ChEBI" id="CHEBI:57705"/>
    </ligand>
</feature>
<feature type="modified residue" description="2-(S-cysteinyl)pyruvic acid O-phosphothioketal" evidence="1">
    <location>
        <position position="126"/>
    </location>
</feature>